<accession>Q9FPJ8</accession>
<accession>Q9FFU0</accession>
<feature type="chain" id="PRO_0000415762" description="Polyadenylate-binding protein RBP45A">
    <location>
        <begin position="1"/>
        <end position="387"/>
    </location>
</feature>
<feature type="domain" description="RRM 1" evidence="2">
    <location>
        <begin position="60"/>
        <end position="140"/>
    </location>
</feature>
<feature type="domain" description="RRM 2" evidence="2">
    <location>
        <begin position="154"/>
        <end position="233"/>
    </location>
</feature>
<feature type="domain" description="RRM 3" evidence="2">
    <location>
        <begin position="260"/>
        <end position="332"/>
    </location>
</feature>
<feature type="region of interest" description="Disordered" evidence="3">
    <location>
        <begin position="329"/>
        <end position="387"/>
    </location>
</feature>
<feature type="compositionally biased region" description="Polar residues" evidence="3">
    <location>
        <begin position="329"/>
        <end position="342"/>
    </location>
</feature>
<keyword id="KW-0507">mRNA processing</keyword>
<keyword id="KW-0539">Nucleus</keyword>
<keyword id="KW-1185">Reference proteome</keyword>
<keyword id="KW-0677">Repeat</keyword>
<keyword id="KW-0694">RNA-binding</keyword>
<gene>
    <name type="primary">RBP45A</name>
    <name type="ordered locus">At5g54900</name>
    <name type="ORF">MBG8.17</name>
</gene>
<name>RB45A_ARATH</name>
<protein>
    <recommendedName>
        <fullName>Polyadenylate-binding protein RBP45A</fullName>
        <shortName>Poly(A)-binding protein RBP45A</shortName>
    </recommendedName>
    <alternativeName>
        <fullName>RNA-binding protein 45A</fullName>
        <shortName>AtRBP45A</shortName>
    </alternativeName>
</protein>
<dbReference type="EMBL" id="AB005232">
    <property type="protein sequence ID" value="BAB08769.1"/>
    <property type="status" value="ALT_SEQ"/>
    <property type="molecule type" value="Genomic_DNA"/>
</dbReference>
<dbReference type="EMBL" id="CP002688">
    <property type="protein sequence ID" value="AED96554.1"/>
    <property type="molecule type" value="Genomic_DNA"/>
</dbReference>
<dbReference type="EMBL" id="AF324983">
    <property type="protein sequence ID" value="AAG40335.1"/>
    <property type="molecule type" value="mRNA"/>
</dbReference>
<dbReference type="EMBL" id="BT029545">
    <property type="protein sequence ID" value="ABL66801.1"/>
    <property type="molecule type" value="mRNA"/>
</dbReference>
<dbReference type="RefSeq" id="NP_568815.1">
    <property type="nucleotide sequence ID" value="NM_124872.3"/>
</dbReference>
<dbReference type="SMR" id="Q9FPJ8"/>
<dbReference type="BioGRID" id="20825">
    <property type="interactions" value="4"/>
</dbReference>
<dbReference type="FunCoup" id="Q9FPJ8">
    <property type="interactions" value="1740"/>
</dbReference>
<dbReference type="IntAct" id="Q9FPJ8">
    <property type="interactions" value="3"/>
</dbReference>
<dbReference type="STRING" id="3702.Q9FPJ8"/>
<dbReference type="iPTMnet" id="Q9FPJ8"/>
<dbReference type="MetOSite" id="Q9FPJ8"/>
<dbReference type="PaxDb" id="3702-AT5G54900.1"/>
<dbReference type="ProteomicsDB" id="236219"/>
<dbReference type="EnsemblPlants" id="AT5G54900.1">
    <property type="protein sequence ID" value="AT5G54900.1"/>
    <property type="gene ID" value="AT5G54900"/>
</dbReference>
<dbReference type="GeneID" id="835581"/>
<dbReference type="Gramene" id="AT5G54900.1">
    <property type="protein sequence ID" value="AT5G54900.1"/>
    <property type="gene ID" value="AT5G54900"/>
</dbReference>
<dbReference type="KEGG" id="ath:AT5G54900"/>
<dbReference type="Araport" id="AT5G54900"/>
<dbReference type="TAIR" id="AT5G54900">
    <property type="gene designation" value="RBP45A"/>
</dbReference>
<dbReference type="eggNOG" id="KOG0118">
    <property type="taxonomic scope" value="Eukaryota"/>
</dbReference>
<dbReference type="HOGENOM" id="CLU_016304_2_1_1"/>
<dbReference type="InParanoid" id="Q9FPJ8"/>
<dbReference type="OMA" id="PQFYQAG"/>
<dbReference type="PhylomeDB" id="Q9FPJ8"/>
<dbReference type="PRO" id="PR:Q9FPJ8"/>
<dbReference type="Proteomes" id="UP000006548">
    <property type="component" value="Chromosome 5"/>
</dbReference>
<dbReference type="ExpressionAtlas" id="Q9FPJ8">
    <property type="expression patterns" value="baseline and differential"/>
</dbReference>
<dbReference type="GO" id="GO:0005634">
    <property type="term" value="C:nucleus"/>
    <property type="evidence" value="ECO:0000250"/>
    <property type="project" value="UniProtKB"/>
</dbReference>
<dbReference type="GO" id="GO:0003729">
    <property type="term" value="F:mRNA binding"/>
    <property type="evidence" value="ECO:0000314"/>
    <property type="project" value="TAIR"/>
</dbReference>
<dbReference type="GO" id="GO:0008143">
    <property type="term" value="F:poly(A) binding"/>
    <property type="evidence" value="ECO:0000250"/>
    <property type="project" value="UniProtKB"/>
</dbReference>
<dbReference type="GO" id="GO:0006397">
    <property type="term" value="P:mRNA processing"/>
    <property type="evidence" value="ECO:0007669"/>
    <property type="project" value="UniProtKB-KW"/>
</dbReference>
<dbReference type="CDD" id="cd12344">
    <property type="entry name" value="RRM1_SECp43_like"/>
    <property type="match status" value="1"/>
</dbReference>
<dbReference type="CDD" id="cd12345">
    <property type="entry name" value="RRM2_SECp43_like"/>
    <property type="match status" value="1"/>
</dbReference>
<dbReference type="CDD" id="cd12346">
    <property type="entry name" value="RRM3_NGR1_NAM8_like"/>
    <property type="match status" value="1"/>
</dbReference>
<dbReference type="FunFam" id="3.30.70.330:FF:000650">
    <property type="entry name" value="Polyadenylate-binding protein RBP45"/>
    <property type="match status" value="1"/>
</dbReference>
<dbReference type="FunFam" id="3.30.70.330:FF:000405">
    <property type="entry name" value="polyadenylate-binding protein RBP45"/>
    <property type="match status" value="1"/>
</dbReference>
<dbReference type="FunFam" id="3.30.70.330:FF:000471">
    <property type="entry name" value="Polyadenylate-binding RBP45B-like protein"/>
    <property type="match status" value="1"/>
</dbReference>
<dbReference type="Gene3D" id="3.30.70.330">
    <property type="match status" value="3"/>
</dbReference>
<dbReference type="InterPro" id="IPR012677">
    <property type="entry name" value="Nucleotide-bd_a/b_plait_sf"/>
</dbReference>
<dbReference type="InterPro" id="IPR035979">
    <property type="entry name" value="RBD_domain_sf"/>
</dbReference>
<dbReference type="InterPro" id="IPR050825">
    <property type="entry name" value="RBM42_RBP45_47-like"/>
</dbReference>
<dbReference type="InterPro" id="IPR000504">
    <property type="entry name" value="RRM_dom"/>
</dbReference>
<dbReference type="PANTHER" id="PTHR47640:SF6">
    <property type="entry name" value="POLYADENYLATE-BINDING PROTEIN RBP45A"/>
    <property type="match status" value="1"/>
</dbReference>
<dbReference type="PANTHER" id="PTHR47640">
    <property type="entry name" value="TRNA SELENOCYSTEINE 1-ASSOCIATED PROTEIN 1-RELATED-RELATED"/>
    <property type="match status" value="1"/>
</dbReference>
<dbReference type="Pfam" id="PF00076">
    <property type="entry name" value="RRM_1"/>
    <property type="match status" value="3"/>
</dbReference>
<dbReference type="SMART" id="SM00360">
    <property type="entry name" value="RRM"/>
    <property type="match status" value="3"/>
</dbReference>
<dbReference type="SUPFAM" id="SSF54928">
    <property type="entry name" value="RNA-binding domain, RBD"/>
    <property type="match status" value="2"/>
</dbReference>
<dbReference type="PROSITE" id="PS50102">
    <property type="entry name" value="RRM"/>
    <property type="match status" value="3"/>
</dbReference>
<reference key="1">
    <citation type="journal article" date="1997" name="DNA Res.">
        <title>Structural analysis of Arabidopsis thaliana chromosome 5. I. Sequence features of the 1.6 Mb regions covered by twenty physically assigned P1 clones.</title>
        <authorList>
            <person name="Sato S."/>
            <person name="Kotani H."/>
            <person name="Nakamura Y."/>
            <person name="Kaneko T."/>
            <person name="Asamizu E."/>
            <person name="Fukami M."/>
            <person name="Miyajima N."/>
            <person name="Tabata S."/>
        </authorList>
    </citation>
    <scope>NUCLEOTIDE SEQUENCE [LARGE SCALE GENOMIC DNA]</scope>
    <source>
        <strain>cv. Columbia</strain>
    </source>
</reference>
<reference key="2">
    <citation type="journal article" date="2017" name="Plant J.">
        <title>Araport11: a complete reannotation of the Arabidopsis thaliana reference genome.</title>
        <authorList>
            <person name="Cheng C.Y."/>
            <person name="Krishnakumar V."/>
            <person name="Chan A.P."/>
            <person name="Thibaud-Nissen F."/>
            <person name="Schobel S."/>
            <person name="Town C.D."/>
        </authorList>
    </citation>
    <scope>GENOME REANNOTATION</scope>
    <source>
        <strain>cv. Columbia</strain>
    </source>
</reference>
<reference key="3">
    <citation type="journal article" date="2003" name="Science">
        <title>Empirical analysis of transcriptional activity in the Arabidopsis genome.</title>
        <authorList>
            <person name="Yamada K."/>
            <person name="Lim J."/>
            <person name="Dale J.M."/>
            <person name="Chen H."/>
            <person name="Shinn P."/>
            <person name="Palm C.J."/>
            <person name="Southwick A.M."/>
            <person name="Wu H.C."/>
            <person name="Kim C.J."/>
            <person name="Nguyen M."/>
            <person name="Pham P.K."/>
            <person name="Cheuk R.F."/>
            <person name="Karlin-Newmann G."/>
            <person name="Liu S.X."/>
            <person name="Lam B."/>
            <person name="Sakano H."/>
            <person name="Wu T."/>
            <person name="Yu G."/>
            <person name="Miranda M."/>
            <person name="Quach H.L."/>
            <person name="Tripp M."/>
            <person name="Chang C.H."/>
            <person name="Lee J.M."/>
            <person name="Toriumi M.J."/>
            <person name="Chan M.M."/>
            <person name="Tang C.C."/>
            <person name="Onodera C.S."/>
            <person name="Deng J.M."/>
            <person name="Akiyama K."/>
            <person name="Ansari Y."/>
            <person name="Arakawa T."/>
            <person name="Banh J."/>
            <person name="Banno F."/>
            <person name="Bowser L."/>
            <person name="Brooks S.Y."/>
            <person name="Carninci P."/>
            <person name="Chao Q."/>
            <person name="Choy N."/>
            <person name="Enju A."/>
            <person name="Goldsmith A.D."/>
            <person name="Gurjal M."/>
            <person name="Hansen N.F."/>
            <person name="Hayashizaki Y."/>
            <person name="Johnson-Hopson C."/>
            <person name="Hsuan V.W."/>
            <person name="Iida K."/>
            <person name="Karnes M."/>
            <person name="Khan S."/>
            <person name="Koesema E."/>
            <person name="Ishida J."/>
            <person name="Jiang P.X."/>
            <person name="Jones T."/>
            <person name="Kawai J."/>
            <person name="Kamiya A."/>
            <person name="Meyers C."/>
            <person name="Nakajima M."/>
            <person name="Narusaka M."/>
            <person name="Seki M."/>
            <person name="Sakurai T."/>
            <person name="Satou M."/>
            <person name="Tamse R."/>
            <person name="Vaysberg M."/>
            <person name="Wallender E.K."/>
            <person name="Wong C."/>
            <person name="Yamamura Y."/>
            <person name="Yuan S."/>
            <person name="Shinozaki K."/>
            <person name="Davis R.W."/>
            <person name="Theologis A."/>
            <person name="Ecker J.R."/>
        </authorList>
    </citation>
    <scope>NUCLEOTIDE SEQUENCE [LARGE SCALE MRNA]</scope>
    <source>
        <strain>cv. Columbia</strain>
    </source>
</reference>
<reference key="4">
    <citation type="submission" date="2006-12" db="EMBL/GenBank/DDBJ databases">
        <title>Arabidopsis ORF clones.</title>
        <authorList>
            <person name="Bautista V.R."/>
            <person name="Kim C.J."/>
            <person name="Chen H."/>
            <person name="Quinitio C."/>
            <person name="Ecker J.R."/>
        </authorList>
    </citation>
    <scope>NUCLEOTIDE SEQUENCE [LARGE SCALE MRNA]</scope>
    <source>
        <strain>cv. Columbia</strain>
    </source>
</reference>
<reference key="5">
    <citation type="journal article" date="2000" name="RNA">
        <title>RBP45 and RBP47, two oligouridylate-specific hnRNP-like proteins interacting with poly(A)+ RNA in nuclei of plant cells.</title>
        <authorList>
            <person name="Lorkovic Z.J."/>
            <person name="Wieczorek Kirk D.A."/>
            <person name="Klahre U."/>
            <person name="Hemmings-Mieszczak M."/>
            <person name="Filipowicz W."/>
        </authorList>
    </citation>
    <scope>TISSUE SPECIFICITY</scope>
    <scope>GENE FAMILY</scope>
    <scope>NOMENCLATURE</scope>
</reference>
<reference key="6">
    <citation type="journal article" date="2006" name="Genes Genet. Syst.">
        <title>Molecular characterization of two anther-specific genes encoding putative RNA-binding proteins, AtRBP45s, in Arabidopsis thaliana.</title>
        <authorList>
            <person name="Park J.-I."/>
            <person name="Endo M."/>
            <person name="Kazama T."/>
            <person name="Saito H."/>
            <person name="Hakozaki H."/>
            <person name="Takada Y."/>
            <person name="Kawagishi-Kobayashi M."/>
            <person name="Watanabe M."/>
        </authorList>
    </citation>
    <scope>TISSUE SPECIFICITY</scope>
</reference>
<reference key="7">
    <citation type="journal article" date="2011" name="Mol. Cells">
        <title>Phylogenetic and expression analysis of RNA-binding proteins with triple RNA recognition motifs in plants.</title>
        <authorList>
            <person name="Peal L."/>
            <person name="Jambunathan N."/>
            <person name="Mahalingam R."/>
        </authorList>
    </citation>
    <scope>INDUCTION BY OZONE</scope>
    <scope>GENE FAMILY</scope>
    <source>
        <strain>cv. Columbia</strain>
        <strain>cv. Wassilewskija</strain>
    </source>
</reference>
<organism>
    <name type="scientific">Arabidopsis thaliana</name>
    <name type="common">Mouse-ear cress</name>
    <dbReference type="NCBI Taxonomy" id="3702"/>
    <lineage>
        <taxon>Eukaryota</taxon>
        <taxon>Viridiplantae</taxon>
        <taxon>Streptophyta</taxon>
        <taxon>Embryophyta</taxon>
        <taxon>Tracheophyta</taxon>
        <taxon>Spermatophyta</taxon>
        <taxon>Magnoliopsida</taxon>
        <taxon>eudicotyledons</taxon>
        <taxon>Gunneridae</taxon>
        <taxon>Pentapetalae</taxon>
        <taxon>rosids</taxon>
        <taxon>malvids</taxon>
        <taxon>Brassicales</taxon>
        <taxon>Brassicaceae</taxon>
        <taxon>Camelineae</taxon>
        <taxon>Arabidopsis</taxon>
    </lineage>
</organism>
<sequence>MQQPPSNAAGAGQIPSGQQHLWMMMQQQQQQQQMQLSAAPLGQHQYGIGSQNPGSASDVKSLWIGDLQQWMDENYIMSVFAQSGEATSAKVIRNKLTGQSEGYGFIEFVSHSVAERVLQTYNGAPMPSTEQTFRLNWAQAGAGEKRFQTEGPDHTIFVGDLAPEVTDYMLSDTFKNVYGSVKGAKVVLDRTTGRSKGYGFVRFADENEQMRAMTEMNGQYCSTRPMRIGPAANKNALPMQPAMYQNTQGANAGDNDPNNTTIFVGGLDANVTDDELKSIFGQFGELLHVKIPPGKRCGFVQYANKASAEHALSVLNGTQLGGQSIRLSWGRSPNKQSDQAQWNGGGYYGYPPQPQGGYGYAAQPPTQDPNAYYGGYTGYGNYQQQRQ</sequence>
<proteinExistence type="evidence at transcript level"/>
<evidence type="ECO:0000250" key="1"/>
<evidence type="ECO:0000255" key="2">
    <source>
        <dbReference type="PROSITE-ProRule" id="PRU00176"/>
    </source>
</evidence>
<evidence type="ECO:0000256" key="3">
    <source>
        <dbReference type="SAM" id="MobiDB-lite"/>
    </source>
</evidence>
<evidence type="ECO:0000269" key="4">
    <source>
    </source>
</evidence>
<evidence type="ECO:0000269" key="5">
    <source>
    </source>
</evidence>
<evidence type="ECO:0000269" key="6">
    <source>
    </source>
</evidence>
<evidence type="ECO:0000305" key="7"/>
<comment type="function">
    <text evidence="1">Heterogeneous nuclear ribonucleoprotein (hnRNP)-protein binding the poly(A) tail of mRNA and probably involved in some steps of pre-mRNA maturation.</text>
</comment>
<comment type="subunit">
    <text evidence="1">Interacts with the poly(A) tail of mRNA in nucleus.</text>
</comment>
<comment type="subcellular location">
    <subcellularLocation>
        <location evidence="1">Nucleus</location>
    </subcellularLocation>
</comment>
<comment type="tissue specificity">
    <text evidence="4 5">Mostly expressed in seedlings, and, to a lower extent, in leaves, stems, and flowers. Present in immature anther tissues (tapetum cells) and mature pollen grains.</text>
</comment>
<comment type="induction">
    <text evidence="6">By ozone-induced oxidative stress.</text>
</comment>
<comment type="similarity">
    <text evidence="7">Belongs to the polyadenylate-binding RBP45 family.</text>
</comment>
<comment type="sequence caution" evidence="7">
    <conflict type="erroneous gene model prediction">
        <sequence resource="EMBL-CDS" id="BAB08769"/>
    </conflict>
</comment>